<proteinExistence type="evidence at transcript level"/>
<gene>
    <name type="primary">NAP1L3</name>
</gene>
<protein>
    <recommendedName>
        <fullName>Nucleosome assembly protein 1-like 3</fullName>
    </recommendedName>
</protein>
<comment type="subcellular location">
    <subcellularLocation>
        <location evidence="1">Nucleus</location>
    </subcellularLocation>
</comment>
<comment type="similarity">
    <text evidence="3">Belongs to the nucleosome assembly protein (NAP) family.</text>
</comment>
<reference key="1">
    <citation type="submission" date="2004-11" db="EMBL/GenBank/DDBJ databases">
        <authorList>
            <consortium name="The German cDNA consortium"/>
        </authorList>
    </citation>
    <scope>NUCLEOTIDE SEQUENCE [LARGE SCALE MRNA]</scope>
    <source>
        <tissue>Brain cortex</tissue>
    </source>
</reference>
<sequence>MAEADFKMVSEPVAHGVAEEEMASSTSDSGEESDSSSSSSSTSGSSSSSSTSGSSSSSGSGSSSSSSGSGSTSSRSRLYRKKRVPEPSRRARRAPLGTNFVDRLPQAVRNRVQALRNIQDECDKVDTLFLKAIHDLERKYAELNKPLYDRRFQIINAEYEPTEEECEWNSEDEEFSSDEEVQDNTPSEMPPLEGEEEENPKENPEVKAEEKEVPKEIPEVKDEEKEVPKEIPQVKAEEKADSKDCMEATPEVNEDPKEAPQVKADDKEQPKATEAKARAAVREAHKRVPEERLQDSVDLKRARKGKPKREDPKGIPDYWLIVLKNVDKLGPMIQKYDEPILKFLSDVSLKFSKPGQPVSYTFEFHFLPNPYFRNEVLVKTYIIKSKPDHNDPFFSWGWEIEDCEGCKIDWRRGKDVTVTTTQSRTTATGEIEIQPRVVPNASFFNFFSPPEIPMIGKLEPREDAILDEDFEIGQILHDNVILKSVYYYTGEVNGTYYQFGKHYGNKKYRK</sequence>
<keyword id="KW-0539">Nucleus</keyword>
<keyword id="KW-1185">Reference proteome</keyword>
<organism>
    <name type="scientific">Pongo abelii</name>
    <name type="common">Sumatran orangutan</name>
    <name type="synonym">Pongo pygmaeus abelii</name>
    <dbReference type="NCBI Taxonomy" id="9601"/>
    <lineage>
        <taxon>Eukaryota</taxon>
        <taxon>Metazoa</taxon>
        <taxon>Chordata</taxon>
        <taxon>Craniata</taxon>
        <taxon>Vertebrata</taxon>
        <taxon>Euteleostomi</taxon>
        <taxon>Mammalia</taxon>
        <taxon>Eutheria</taxon>
        <taxon>Euarchontoglires</taxon>
        <taxon>Primates</taxon>
        <taxon>Haplorrhini</taxon>
        <taxon>Catarrhini</taxon>
        <taxon>Hominidae</taxon>
        <taxon>Pongo</taxon>
    </lineage>
</organism>
<evidence type="ECO:0000250" key="1"/>
<evidence type="ECO:0000256" key="2">
    <source>
        <dbReference type="SAM" id="MobiDB-lite"/>
    </source>
</evidence>
<evidence type="ECO:0000305" key="3"/>
<dbReference type="EMBL" id="CR860620">
    <property type="protein sequence ID" value="CAH92741.1"/>
    <property type="molecule type" value="mRNA"/>
</dbReference>
<dbReference type="RefSeq" id="NP_001126599.1">
    <property type="nucleotide sequence ID" value="NM_001133127.1"/>
</dbReference>
<dbReference type="SMR" id="Q5R675"/>
<dbReference type="FunCoup" id="Q5R675">
    <property type="interactions" value="370"/>
</dbReference>
<dbReference type="STRING" id="9601.ENSPPYP00000022984"/>
<dbReference type="GeneID" id="100173596"/>
<dbReference type="KEGG" id="pon:100173596"/>
<dbReference type="CTD" id="4675"/>
<dbReference type="eggNOG" id="KOG1507">
    <property type="taxonomic scope" value="Eukaryota"/>
</dbReference>
<dbReference type="InParanoid" id="Q5R675"/>
<dbReference type="OrthoDB" id="27325at2759"/>
<dbReference type="Proteomes" id="UP000001595">
    <property type="component" value="Unplaced"/>
</dbReference>
<dbReference type="GO" id="GO:0005634">
    <property type="term" value="C:nucleus"/>
    <property type="evidence" value="ECO:0007669"/>
    <property type="project" value="UniProtKB-SubCell"/>
</dbReference>
<dbReference type="GO" id="GO:0006334">
    <property type="term" value="P:nucleosome assembly"/>
    <property type="evidence" value="ECO:0007669"/>
    <property type="project" value="InterPro"/>
</dbReference>
<dbReference type="FunFam" id="1.20.5.1500:FF:000001">
    <property type="entry name" value="Nucleosome assembly protein 1-like 1"/>
    <property type="match status" value="1"/>
</dbReference>
<dbReference type="FunFam" id="3.30.1120.90:FF:000001">
    <property type="entry name" value="Nucleosome assembly protein 1-like 1"/>
    <property type="match status" value="1"/>
</dbReference>
<dbReference type="Gene3D" id="1.20.5.1500">
    <property type="match status" value="1"/>
</dbReference>
<dbReference type="Gene3D" id="3.30.1120.90">
    <property type="entry name" value="Nucleosome assembly protein"/>
    <property type="match status" value="1"/>
</dbReference>
<dbReference type="InterPro" id="IPR037231">
    <property type="entry name" value="NAP-like_sf"/>
</dbReference>
<dbReference type="InterPro" id="IPR002164">
    <property type="entry name" value="NAP_family"/>
</dbReference>
<dbReference type="PANTHER" id="PTHR11875">
    <property type="entry name" value="TESTIS-SPECIFIC Y-ENCODED PROTEIN"/>
    <property type="match status" value="1"/>
</dbReference>
<dbReference type="Pfam" id="PF00956">
    <property type="entry name" value="NAP"/>
    <property type="match status" value="2"/>
</dbReference>
<dbReference type="SUPFAM" id="SSF143113">
    <property type="entry name" value="NAP-like"/>
    <property type="match status" value="1"/>
</dbReference>
<feature type="chain" id="PRO_0000317137" description="Nucleosome assembly protein 1-like 3">
    <location>
        <begin position="1"/>
        <end position="510"/>
    </location>
</feature>
<feature type="region of interest" description="Disordered" evidence="2">
    <location>
        <begin position="1"/>
        <end position="99"/>
    </location>
</feature>
<feature type="region of interest" description="Disordered" evidence="2">
    <location>
        <begin position="161"/>
        <end position="311"/>
    </location>
</feature>
<feature type="compositionally biased region" description="Low complexity" evidence="2">
    <location>
        <begin position="35"/>
        <end position="74"/>
    </location>
</feature>
<feature type="compositionally biased region" description="Acidic residues" evidence="2">
    <location>
        <begin position="161"/>
        <end position="182"/>
    </location>
</feature>
<feature type="compositionally biased region" description="Basic and acidic residues" evidence="2">
    <location>
        <begin position="200"/>
        <end position="229"/>
    </location>
</feature>
<feature type="compositionally biased region" description="Basic and acidic residues" evidence="2">
    <location>
        <begin position="235"/>
        <end position="246"/>
    </location>
</feature>
<feature type="compositionally biased region" description="Basic and acidic residues" evidence="2">
    <location>
        <begin position="254"/>
        <end position="300"/>
    </location>
</feature>
<name>NP1L3_PONAB</name>
<accession>Q5R675</accession>